<evidence type="ECO:0000255" key="1">
    <source>
        <dbReference type="HAMAP-Rule" id="MF_00258"/>
    </source>
</evidence>
<organism>
    <name type="scientific">Lactobacillus acidophilus (strain ATCC 700396 / NCK56 / N2 / NCFM)</name>
    <dbReference type="NCBI Taxonomy" id="272621"/>
    <lineage>
        <taxon>Bacteria</taxon>
        <taxon>Bacillati</taxon>
        <taxon>Bacillota</taxon>
        <taxon>Bacilli</taxon>
        <taxon>Lactobacillales</taxon>
        <taxon>Lactobacillaceae</taxon>
        <taxon>Lactobacillus</taxon>
    </lineage>
</organism>
<reference key="1">
    <citation type="journal article" date="2005" name="Proc. Natl. Acad. Sci. U.S.A.">
        <title>Complete genome sequence of the probiotic lactic acid bacterium Lactobacillus acidophilus NCFM.</title>
        <authorList>
            <person name="Altermann E."/>
            <person name="Russell W.M."/>
            <person name="Azcarate-Peril M.A."/>
            <person name="Barrangou R."/>
            <person name="Buck B.L."/>
            <person name="McAuliffe O."/>
            <person name="Souther N."/>
            <person name="Dobson A."/>
            <person name="Duong T."/>
            <person name="Callanan M."/>
            <person name="Lick S."/>
            <person name="Hamrick A."/>
            <person name="Cano R."/>
            <person name="Klaenhammer T.R."/>
        </authorList>
    </citation>
    <scope>NUCLEOTIDE SEQUENCE [LARGE SCALE GENOMIC DNA]</scope>
    <source>
        <strain>ATCC 700396 / NCK56 / N2 / NCFM</strain>
    </source>
</reference>
<gene>
    <name evidence="1" type="primary">murI</name>
    <name type="ordered locus">LBA0425</name>
</gene>
<sequence>MDNRPIGLLDSGFGGLSVAKKVIEKLPNESTIFIGDNAHIPYGDRTREDIINLTRRSVKFLLEKNVKLIVIACNTATAVAMPTMQKEVEQQIIGVIQSGALAAARTTKNKNVAVVATNVTVASHAYQKEIKFRDPEIKVTELAAPKLAPLVEAQKDYATNLKVVKESLAPLMGKEFDTLVLGCTHYPLIQKEFEEAINNKEVTILDPADQVAQYTFNVMRRDGLFSDSEKAVHEYYTTGNSETFDKLARTFMDDDTLTSKHVDTENY</sequence>
<accession>Q5FLV8</accession>
<dbReference type="EC" id="5.1.1.3" evidence="1"/>
<dbReference type="EMBL" id="CP000033">
    <property type="protein sequence ID" value="AAV42316.1"/>
    <property type="molecule type" value="Genomic_DNA"/>
</dbReference>
<dbReference type="RefSeq" id="WP_003549203.1">
    <property type="nucleotide sequence ID" value="NC_006814.3"/>
</dbReference>
<dbReference type="RefSeq" id="YP_193347.1">
    <property type="nucleotide sequence ID" value="NC_006814.3"/>
</dbReference>
<dbReference type="SMR" id="Q5FLV8"/>
<dbReference type="STRING" id="272621.LBA0425"/>
<dbReference type="GeneID" id="93290476"/>
<dbReference type="KEGG" id="lac:LBA0425"/>
<dbReference type="PATRIC" id="fig|272621.13.peg.410"/>
<dbReference type="eggNOG" id="COG0796">
    <property type="taxonomic scope" value="Bacteria"/>
</dbReference>
<dbReference type="HOGENOM" id="CLU_052344_0_2_9"/>
<dbReference type="OrthoDB" id="9801055at2"/>
<dbReference type="BioCyc" id="LACI272621:G1G49-419-MONOMER"/>
<dbReference type="UniPathway" id="UPA00219"/>
<dbReference type="Proteomes" id="UP000006381">
    <property type="component" value="Chromosome"/>
</dbReference>
<dbReference type="GO" id="GO:0008881">
    <property type="term" value="F:glutamate racemase activity"/>
    <property type="evidence" value="ECO:0007669"/>
    <property type="project" value="UniProtKB-UniRule"/>
</dbReference>
<dbReference type="GO" id="GO:0071555">
    <property type="term" value="P:cell wall organization"/>
    <property type="evidence" value="ECO:0007669"/>
    <property type="project" value="UniProtKB-KW"/>
</dbReference>
<dbReference type="GO" id="GO:0009252">
    <property type="term" value="P:peptidoglycan biosynthetic process"/>
    <property type="evidence" value="ECO:0007669"/>
    <property type="project" value="UniProtKB-UniRule"/>
</dbReference>
<dbReference type="GO" id="GO:0008360">
    <property type="term" value="P:regulation of cell shape"/>
    <property type="evidence" value="ECO:0007669"/>
    <property type="project" value="UniProtKB-KW"/>
</dbReference>
<dbReference type="FunFam" id="3.40.50.1860:FF:000001">
    <property type="entry name" value="Glutamate racemase"/>
    <property type="match status" value="1"/>
</dbReference>
<dbReference type="Gene3D" id="3.40.50.1860">
    <property type="match status" value="2"/>
</dbReference>
<dbReference type="HAMAP" id="MF_00258">
    <property type="entry name" value="Glu_racemase"/>
    <property type="match status" value="1"/>
</dbReference>
<dbReference type="InterPro" id="IPR015942">
    <property type="entry name" value="Asp/Glu/hydantoin_racemase"/>
</dbReference>
<dbReference type="InterPro" id="IPR001920">
    <property type="entry name" value="Asp/Glu_race"/>
</dbReference>
<dbReference type="InterPro" id="IPR018187">
    <property type="entry name" value="Asp/Glu_racemase_AS_1"/>
</dbReference>
<dbReference type="InterPro" id="IPR033134">
    <property type="entry name" value="Asp/Glu_racemase_AS_2"/>
</dbReference>
<dbReference type="InterPro" id="IPR004391">
    <property type="entry name" value="Glu_race"/>
</dbReference>
<dbReference type="NCBIfam" id="TIGR00067">
    <property type="entry name" value="glut_race"/>
    <property type="match status" value="1"/>
</dbReference>
<dbReference type="PANTHER" id="PTHR21198">
    <property type="entry name" value="GLUTAMATE RACEMASE"/>
    <property type="match status" value="1"/>
</dbReference>
<dbReference type="PANTHER" id="PTHR21198:SF2">
    <property type="entry name" value="GLUTAMATE RACEMASE"/>
    <property type="match status" value="1"/>
</dbReference>
<dbReference type="Pfam" id="PF01177">
    <property type="entry name" value="Asp_Glu_race"/>
    <property type="match status" value="1"/>
</dbReference>
<dbReference type="SUPFAM" id="SSF53681">
    <property type="entry name" value="Aspartate/glutamate racemase"/>
    <property type="match status" value="2"/>
</dbReference>
<dbReference type="PROSITE" id="PS00923">
    <property type="entry name" value="ASP_GLU_RACEMASE_1"/>
    <property type="match status" value="1"/>
</dbReference>
<dbReference type="PROSITE" id="PS00924">
    <property type="entry name" value="ASP_GLU_RACEMASE_2"/>
    <property type="match status" value="1"/>
</dbReference>
<feature type="chain" id="PRO_1000047574" description="Glutamate racemase">
    <location>
        <begin position="1"/>
        <end position="267"/>
    </location>
</feature>
<feature type="active site" description="Proton donor/acceptor" evidence="1">
    <location>
        <position position="73"/>
    </location>
</feature>
<feature type="active site" description="Proton donor/acceptor" evidence="1">
    <location>
        <position position="183"/>
    </location>
</feature>
<feature type="binding site" evidence="1">
    <location>
        <begin position="10"/>
        <end position="11"/>
    </location>
    <ligand>
        <name>substrate</name>
    </ligand>
</feature>
<feature type="binding site" evidence="1">
    <location>
        <begin position="42"/>
        <end position="43"/>
    </location>
    <ligand>
        <name>substrate</name>
    </ligand>
</feature>
<feature type="binding site" evidence="1">
    <location>
        <begin position="74"/>
        <end position="75"/>
    </location>
    <ligand>
        <name>substrate</name>
    </ligand>
</feature>
<feature type="binding site" evidence="1">
    <location>
        <begin position="184"/>
        <end position="185"/>
    </location>
    <ligand>
        <name>substrate</name>
    </ligand>
</feature>
<name>MURI_LACAC</name>
<comment type="function">
    <text evidence="1">Provides the (R)-glutamate required for cell wall biosynthesis.</text>
</comment>
<comment type="catalytic activity">
    <reaction evidence="1">
        <text>L-glutamate = D-glutamate</text>
        <dbReference type="Rhea" id="RHEA:12813"/>
        <dbReference type="ChEBI" id="CHEBI:29985"/>
        <dbReference type="ChEBI" id="CHEBI:29986"/>
        <dbReference type="EC" id="5.1.1.3"/>
    </reaction>
</comment>
<comment type="pathway">
    <text evidence="1">Cell wall biogenesis; peptidoglycan biosynthesis.</text>
</comment>
<comment type="similarity">
    <text evidence="1">Belongs to the aspartate/glutamate racemases family.</text>
</comment>
<keyword id="KW-0133">Cell shape</keyword>
<keyword id="KW-0961">Cell wall biogenesis/degradation</keyword>
<keyword id="KW-0413">Isomerase</keyword>
<keyword id="KW-0573">Peptidoglycan synthesis</keyword>
<keyword id="KW-1185">Reference proteome</keyword>
<protein>
    <recommendedName>
        <fullName evidence="1">Glutamate racemase</fullName>
        <ecNumber evidence="1">5.1.1.3</ecNumber>
    </recommendedName>
</protein>
<proteinExistence type="inferred from homology"/>